<organism>
    <name type="scientific">Listeria monocytogenes serotype 4b (strain F2365)</name>
    <dbReference type="NCBI Taxonomy" id="265669"/>
    <lineage>
        <taxon>Bacteria</taxon>
        <taxon>Bacillati</taxon>
        <taxon>Bacillota</taxon>
        <taxon>Bacilli</taxon>
        <taxon>Bacillales</taxon>
        <taxon>Listeriaceae</taxon>
        <taxon>Listeria</taxon>
    </lineage>
</organism>
<accession>Q71ZU1</accession>
<name>YIDC2_LISMF</name>
<sequence>MKKKNIILISVLLGALLLLTGCSMDPSQNTDGFFSTYLIQPFTSFIMFVAKFVGGNYGIAIIITTLLIRALIMPLNLRTAKAQMGMQSKMAVAKPEIDEIQARLKRATSKEEQATIQKEMMAVYSKYNINPMQMGCLPLLIQMPILMAFYYAIRGSSEIASHTFLWFNLGSPDMVLAIIAGLVYLAQYFVSMIGYSPEQKKQMKIIGLMSPIMILFVSFTAPSALALYWAVGGLFLAGQTLLTKKLYMNKHPEIKVMEQEEKEFEQIVEEQKKEK</sequence>
<feature type="signal peptide" evidence="1">
    <location>
        <begin position="1"/>
        <end position="21"/>
    </location>
</feature>
<feature type="chain" id="PRO_0000020388" description="Membrane protein insertase YidC 2">
    <location>
        <begin position="22"/>
        <end position="275"/>
    </location>
</feature>
<feature type="transmembrane region" description="Helical" evidence="1">
    <location>
        <begin position="48"/>
        <end position="68"/>
    </location>
</feature>
<feature type="transmembrane region" description="Helical" evidence="1">
    <location>
        <begin position="133"/>
        <end position="153"/>
    </location>
</feature>
<feature type="transmembrane region" description="Helical" evidence="1">
    <location>
        <begin position="174"/>
        <end position="194"/>
    </location>
</feature>
<feature type="transmembrane region" description="Helical" evidence="1">
    <location>
        <begin position="212"/>
        <end position="232"/>
    </location>
</feature>
<feature type="lipid moiety-binding region" description="N-palmitoyl cysteine" evidence="1">
    <location>
        <position position="22"/>
    </location>
</feature>
<feature type="lipid moiety-binding region" description="S-diacylglycerol cysteine" evidence="1">
    <location>
        <position position="22"/>
    </location>
</feature>
<protein>
    <recommendedName>
        <fullName evidence="1">Membrane protein insertase YidC 2</fullName>
    </recommendedName>
    <alternativeName>
        <fullName evidence="1">Foldase YidC 2</fullName>
    </alternativeName>
    <alternativeName>
        <fullName evidence="1">Membrane integrase YidC 2</fullName>
    </alternativeName>
    <alternativeName>
        <fullName evidence="1">Membrane protein YidC 2</fullName>
    </alternativeName>
</protein>
<comment type="function">
    <text evidence="1">Required for the insertion and/or proper folding and/or complex formation of integral membrane proteins into the membrane. Involved in integration of membrane proteins that insert both dependently and independently of the Sec translocase complex, as well as at least some lipoproteins.</text>
</comment>
<comment type="subcellular location">
    <subcellularLocation>
        <location evidence="1">Cell membrane</location>
        <topology evidence="1">Multi-pass membrane protein</topology>
    </subcellularLocation>
</comment>
<comment type="similarity">
    <text evidence="1">Belongs to the OXA1/ALB3/YidC family. Type 2 subfamily.</text>
</comment>
<keyword id="KW-1003">Cell membrane</keyword>
<keyword id="KW-0143">Chaperone</keyword>
<keyword id="KW-0449">Lipoprotein</keyword>
<keyword id="KW-0472">Membrane</keyword>
<keyword id="KW-0564">Palmitate</keyword>
<keyword id="KW-0653">Protein transport</keyword>
<keyword id="KW-0732">Signal</keyword>
<keyword id="KW-0812">Transmembrane</keyword>
<keyword id="KW-1133">Transmembrane helix</keyword>
<keyword id="KW-0813">Transport</keyword>
<proteinExistence type="inferred from homology"/>
<dbReference type="EMBL" id="AE017262">
    <property type="protein sequence ID" value="AAT04173.1"/>
    <property type="molecule type" value="Genomic_DNA"/>
</dbReference>
<dbReference type="RefSeq" id="WP_003722505.1">
    <property type="nucleotide sequence ID" value="NC_002973.6"/>
</dbReference>
<dbReference type="SMR" id="Q71ZU1"/>
<dbReference type="KEGG" id="lmf:LMOf2365_1398"/>
<dbReference type="HOGENOM" id="CLU_036138_5_1_9"/>
<dbReference type="GO" id="GO:0005886">
    <property type="term" value="C:plasma membrane"/>
    <property type="evidence" value="ECO:0007669"/>
    <property type="project" value="UniProtKB-SubCell"/>
</dbReference>
<dbReference type="GO" id="GO:0032977">
    <property type="term" value="F:membrane insertase activity"/>
    <property type="evidence" value="ECO:0007669"/>
    <property type="project" value="InterPro"/>
</dbReference>
<dbReference type="GO" id="GO:0051205">
    <property type="term" value="P:protein insertion into membrane"/>
    <property type="evidence" value="ECO:0007669"/>
    <property type="project" value="TreeGrafter"/>
</dbReference>
<dbReference type="GO" id="GO:0015031">
    <property type="term" value="P:protein transport"/>
    <property type="evidence" value="ECO:0007669"/>
    <property type="project" value="UniProtKB-KW"/>
</dbReference>
<dbReference type="CDD" id="cd20070">
    <property type="entry name" value="5TM_YidC_Alb3"/>
    <property type="match status" value="1"/>
</dbReference>
<dbReference type="HAMAP" id="MF_01811">
    <property type="entry name" value="YidC_type2"/>
    <property type="match status" value="1"/>
</dbReference>
<dbReference type="InterPro" id="IPR001708">
    <property type="entry name" value="YidC/ALB3/OXA1/COX18"/>
</dbReference>
<dbReference type="InterPro" id="IPR028055">
    <property type="entry name" value="YidC/Oxa/ALB_C"/>
</dbReference>
<dbReference type="InterPro" id="IPR023060">
    <property type="entry name" value="YidC/YidC1/YidC2_Firmicutes"/>
</dbReference>
<dbReference type="InterPro" id="IPR047196">
    <property type="entry name" value="YidC_ALB_C"/>
</dbReference>
<dbReference type="NCBIfam" id="TIGR03592">
    <property type="entry name" value="yidC_oxa1_cterm"/>
    <property type="match status" value="1"/>
</dbReference>
<dbReference type="PANTHER" id="PTHR12428:SF65">
    <property type="entry name" value="CYTOCHROME C OXIDASE ASSEMBLY PROTEIN COX18, MITOCHONDRIAL"/>
    <property type="match status" value="1"/>
</dbReference>
<dbReference type="PANTHER" id="PTHR12428">
    <property type="entry name" value="OXA1"/>
    <property type="match status" value="1"/>
</dbReference>
<dbReference type="Pfam" id="PF02096">
    <property type="entry name" value="60KD_IMP"/>
    <property type="match status" value="1"/>
</dbReference>
<dbReference type="PROSITE" id="PS51257">
    <property type="entry name" value="PROKAR_LIPOPROTEIN"/>
    <property type="match status" value="1"/>
</dbReference>
<reference key="1">
    <citation type="journal article" date="2004" name="Nucleic Acids Res.">
        <title>Whole genome comparisons of serotype 4b and 1/2a strains of the food-borne pathogen Listeria monocytogenes reveal new insights into the core genome components of this species.</title>
        <authorList>
            <person name="Nelson K.E."/>
            <person name="Fouts D.E."/>
            <person name="Mongodin E.F."/>
            <person name="Ravel J."/>
            <person name="DeBoy R.T."/>
            <person name="Kolonay J.F."/>
            <person name="Rasko D.A."/>
            <person name="Angiuoli S.V."/>
            <person name="Gill S.R."/>
            <person name="Paulsen I.T."/>
            <person name="Peterson J.D."/>
            <person name="White O."/>
            <person name="Nelson W.C."/>
            <person name="Nierman W.C."/>
            <person name="Beanan M.J."/>
            <person name="Brinkac L.M."/>
            <person name="Daugherty S.C."/>
            <person name="Dodson R.J."/>
            <person name="Durkin A.S."/>
            <person name="Madupu R."/>
            <person name="Haft D.H."/>
            <person name="Selengut J."/>
            <person name="Van Aken S.E."/>
            <person name="Khouri H.M."/>
            <person name="Fedorova N."/>
            <person name="Forberger H.A."/>
            <person name="Tran B."/>
            <person name="Kathariou S."/>
            <person name="Wonderling L.D."/>
            <person name="Uhlich G.A."/>
            <person name="Bayles D.O."/>
            <person name="Luchansky J.B."/>
            <person name="Fraser C.M."/>
        </authorList>
    </citation>
    <scope>NUCLEOTIDE SEQUENCE [LARGE SCALE GENOMIC DNA]</scope>
    <source>
        <strain>F2365</strain>
    </source>
</reference>
<gene>
    <name evidence="1" type="primary">yidC2</name>
    <name type="ordered locus">LMOf2365_1398</name>
</gene>
<evidence type="ECO:0000255" key="1">
    <source>
        <dbReference type="HAMAP-Rule" id="MF_01811"/>
    </source>
</evidence>